<comment type="function">
    <text evidence="1">Isomerase that catalyzes the conversion of deoxy-ribose 1-phosphate (dRib-1-P) and ribose 1-phosphate (Rib-1-P) to deoxy-ribose 5-phosphate (dRib-5-P) and ribose 5-phosphate (Rib-5-P), respectively.</text>
</comment>
<comment type="catalytic activity">
    <reaction evidence="1">
        <text>2-deoxy-alpha-D-ribose 1-phosphate = 2-deoxy-D-ribose 5-phosphate</text>
        <dbReference type="Rhea" id="RHEA:27658"/>
        <dbReference type="ChEBI" id="CHEBI:57259"/>
        <dbReference type="ChEBI" id="CHEBI:62877"/>
        <dbReference type="EC" id="5.4.2.7"/>
    </reaction>
</comment>
<comment type="catalytic activity">
    <reaction evidence="1">
        <text>alpha-D-ribose 1-phosphate = D-ribose 5-phosphate</text>
        <dbReference type="Rhea" id="RHEA:18793"/>
        <dbReference type="ChEBI" id="CHEBI:57720"/>
        <dbReference type="ChEBI" id="CHEBI:78346"/>
        <dbReference type="EC" id="5.4.2.7"/>
    </reaction>
</comment>
<comment type="cofactor">
    <cofactor evidence="1">
        <name>Mn(2+)</name>
        <dbReference type="ChEBI" id="CHEBI:29035"/>
    </cofactor>
    <text evidence="1">Binds 2 manganese ions.</text>
</comment>
<comment type="pathway">
    <text evidence="1">Carbohydrate degradation; 2-deoxy-D-ribose 1-phosphate degradation; D-glyceraldehyde 3-phosphate and acetaldehyde from 2-deoxy-alpha-D-ribose 1-phosphate: step 1/2.</text>
</comment>
<comment type="subcellular location">
    <subcellularLocation>
        <location evidence="1">Cytoplasm</location>
    </subcellularLocation>
</comment>
<comment type="similarity">
    <text evidence="1">Belongs to the phosphopentomutase family.</text>
</comment>
<protein>
    <recommendedName>
        <fullName evidence="1">Phosphopentomutase</fullName>
        <ecNumber evidence="1">5.4.2.7</ecNumber>
    </recommendedName>
    <alternativeName>
        <fullName evidence="1">Phosphodeoxyribomutase</fullName>
    </alternativeName>
</protein>
<sequence length="407" mass="44370">MKRAFIMVLDSFGIGATEDAERFGDVGADTLGHIAEACAKGEADNGRKGPLNLPNLTRLGLAKAHEGSTGFIPAGMDGNAEVIGAYAWAHEMSSGKDTPSGHWEIAGVPVLFEWGYFSDHENSFPQELLDKLVERANLPGYLGNCHSSGTVILDQLGEEHMKTGKPIFYTSADSVFQIACHEETFGLDKLYELCEIAREELTNGGYNIGRVIARPFIGDKAGNFQRTGNRHDLAVEPPAPTVLQKLVDEKHGQVVSVGKIADIYANCGITKKVKATGLDALFDATIKEMKEAGDNTIVFTNFVDFDSSWGHRRDVAGYAAGLELFDRRLPELMSLLRDDDILILTADHGCDPTWTGTDHTREHIPVLVYGPKVKPGSLGHRETFADIGQTLAKYFGTSDMEYGKAMF</sequence>
<organism>
    <name type="scientific">Escherichia coli O17:K52:H18 (strain UMN026 / ExPEC)</name>
    <dbReference type="NCBI Taxonomy" id="585056"/>
    <lineage>
        <taxon>Bacteria</taxon>
        <taxon>Pseudomonadati</taxon>
        <taxon>Pseudomonadota</taxon>
        <taxon>Gammaproteobacteria</taxon>
        <taxon>Enterobacterales</taxon>
        <taxon>Enterobacteriaceae</taxon>
        <taxon>Escherichia</taxon>
    </lineage>
</organism>
<dbReference type="EC" id="5.4.2.7" evidence="1"/>
<dbReference type="EMBL" id="CU928163">
    <property type="protein sequence ID" value="CAR16116.1"/>
    <property type="molecule type" value="Genomic_DNA"/>
</dbReference>
<dbReference type="RefSeq" id="WP_000816471.1">
    <property type="nucleotide sequence ID" value="NC_011751.1"/>
</dbReference>
<dbReference type="RefSeq" id="YP_002415580.1">
    <property type="nucleotide sequence ID" value="NC_011751.1"/>
</dbReference>
<dbReference type="SMR" id="B7NH51"/>
<dbReference type="STRING" id="585056.ECUMN_5007"/>
<dbReference type="GeneID" id="89519362"/>
<dbReference type="KEGG" id="eum:ECUMN_5007"/>
<dbReference type="PATRIC" id="fig|585056.7.peg.5172"/>
<dbReference type="HOGENOM" id="CLU_053861_0_0_6"/>
<dbReference type="UniPathway" id="UPA00002">
    <property type="reaction ID" value="UER00467"/>
</dbReference>
<dbReference type="Proteomes" id="UP000007097">
    <property type="component" value="Chromosome"/>
</dbReference>
<dbReference type="GO" id="GO:0005829">
    <property type="term" value="C:cytosol"/>
    <property type="evidence" value="ECO:0007669"/>
    <property type="project" value="TreeGrafter"/>
</dbReference>
<dbReference type="GO" id="GO:0000287">
    <property type="term" value="F:magnesium ion binding"/>
    <property type="evidence" value="ECO:0007669"/>
    <property type="project" value="InterPro"/>
</dbReference>
<dbReference type="GO" id="GO:0030145">
    <property type="term" value="F:manganese ion binding"/>
    <property type="evidence" value="ECO:0007669"/>
    <property type="project" value="UniProtKB-UniRule"/>
</dbReference>
<dbReference type="GO" id="GO:0008973">
    <property type="term" value="F:phosphopentomutase activity"/>
    <property type="evidence" value="ECO:0007669"/>
    <property type="project" value="UniProtKB-UniRule"/>
</dbReference>
<dbReference type="GO" id="GO:0006018">
    <property type="term" value="P:2-deoxyribose 1-phosphate catabolic process"/>
    <property type="evidence" value="ECO:0007669"/>
    <property type="project" value="UniProtKB-UniRule"/>
</dbReference>
<dbReference type="GO" id="GO:0006015">
    <property type="term" value="P:5-phosphoribose 1-diphosphate biosynthetic process"/>
    <property type="evidence" value="ECO:0007669"/>
    <property type="project" value="UniProtKB-UniPathway"/>
</dbReference>
<dbReference type="GO" id="GO:0043094">
    <property type="term" value="P:metabolic compound salvage"/>
    <property type="evidence" value="ECO:0007669"/>
    <property type="project" value="InterPro"/>
</dbReference>
<dbReference type="GO" id="GO:0009117">
    <property type="term" value="P:nucleotide metabolic process"/>
    <property type="evidence" value="ECO:0007669"/>
    <property type="project" value="InterPro"/>
</dbReference>
<dbReference type="CDD" id="cd16009">
    <property type="entry name" value="PPM"/>
    <property type="match status" value="1"/>
</dbReference>
<dbReference type="FunFam" id="3.30.70.1250:FF:000001">
    <property type="entry name" value="Phosphopentomutase"/>
    <property type="match status" value="1"/>
</dbReference>
<dbReference type="Gene3D" id="3.40.720.10">
    <property type="entry name" value="Alkaline Phosphatase, subunit A"/>
    <property type="match status" value="1"/>
</dbReference>
<dbReference type="Gene3D" id="3.30.70.1250">
    <property type="entry name" value="Phosphopentomutase"/>
    <property type="match status" value="1"/>
</dbReference>
<dbReference type="HAMAP" id="MF_00740">
    <property type="entry name" value="Phosphopentomut"/>
    <property type="match status" value="1"/>
</dbReference>
<dbReference type="InterPro" id="IPR017850">
    <property type="entry name" value="Alkaline_phosphatase_core_sf"/>
</dbReference>
<dbReference type="InterPro" id="IPR010045">
    <property type="entry name" value="DeoB"/>
</dbReference>
<dbReference type="InterPro" id="IPR006124">
    <property type="entry name" value="Metalloenzyme"/>
</dbReference>
<dbReference type="InterPro" id="IPR024052">
    <property type="entry name" value="Phosphopentomutase_DeoB_cap_sf"/>
</dbReference>
<dbReference type="NCBIfam" id="TIGR01696">
    <property type="entry name" value="deoB"/>
    <property type="match status" value="1"/>
</dbReference>
<dbReference type="NCBIfam" id="NF003766">
    <property type="entry name" value="PRK05362.1"/>
    <property type="match status" value="1"/>
</dbReference>
<dbReference type="PANTHER" id="PTHR21110">
    <property type="entry name" value="PHOSPHOPENTOMUTASE"/>
    <property type="match status" value="1"/>
</dbReference>
<dbReference type="PANTHER" id="PTHR21110:SF0">
    <property type="entry name" value="PHOSPHOPENTOMUTASE"/>
    <property type="match status" value="1"/>
</dbReference>
<dbReference type="Pfam" id="PF01676">
    <property type="entry name" value="Metalloenzyme"/>
    <property type="match status" value="1"/>
</dbReference>
<dbReference type="PIRSF" id="PIRSF001491">
    <property type="entry name" value="Ppentomutase"/>
    <property type="match status" value="1"/>
</dbReference>
<dbReference type="SUPFAM" id="SSF53649">
    <property type="entry name" value="Alkaline phosphatase-like"/>
    <property type="match status" value="1"/>
</dbReference>
<dbReference type="SUPFAM" id="SSF143856">
    <property type="entry name" value="DeoB insert domain-like"/>
    <property type="match status" value="1"/>
</dbReference>
<reference key="1">
    <citation type="journal article" date="2009" name="PLoS Genet.">
        <title>Organised genome dynamics in the Escherichia coli species results in highly diverse adaptive paths.</title>
        <authorList>
            <person name="Touchon M."/>
            <person name="Hoede C."/>
            <person name="Tenaillon O."/>
            <person name="Barbe V."/>
            <person name="Baeriswyl S."/>
            <person name="Bidet P."/>
            <person name="Bingen E."/>
            <person name="Bonacorsi S."/>
            <person name="Bouchier C."/>
            <person name="Bouvet O."/>
            <person name="Calteau A."/>
            <person name="Chiapello H."/>
            <person name="Clermont O."/>
            <person name="Cruveiller S."/>
            <person name="Danchin A."/>
            <person name="Diard M."/>
            <person name="Dossat C."/>
            <person name="Karoui M.E."/>
            <person name="Frapy E."/>
            <person name="Garry L."/>
            <person name="Ghigo J.M."/>
            <person name="Gilles A.M."/>
            <person name="Johnson J."/>
            <person name="Le Bouguenec C."/>
            <person name="Lescat M."/>
            <person name="Mangenot S."/>
            <person name="Martinez-Jehanne V."/>
            <person name="Matic I."/>
            <person name="Nassif X."/>
            <person name="Oztas S."/>
            <person name="Petit M.A."/>
            <person name="Pichon C."/>
            <person name="Rouy Z."/>
            <person name="Ruf C.S."/>
            <person name="Schneider D."/>
            <person name="Tourret J."/>
            <person name="Vacherie B."/>
            <person name="Vallenet D."/>
            <person name="Medigue C."/>
            <person name="Rocha E.P.C."/>
            <person name="Denamur E."/>
        </authorList>
    </citation>
    <scope>NUCLEOTIDE SEQUENCE [LARGE SCALE GENOMIC DNA]</scope>
    <source>
        <strain>UMN026 / ExPEC</strain>
    </source>
</reference>
<feature type="chain" id="PRO_1000133073" description="Phosphopentomutase">
    <location>
        <begin position="1"/>
        <end position="407"/>
    </location>
</feature>
<feature type="binding site" evidence="1">
    <location>
        <position position="10"/>
    </location>
    <ligand>
        <name>Mn(2+)</name>
        <dbReference type="ChEBI" id="CHEBI:29035"/>
        <label>1</label>
    </ligand>
</feature>
<feature type="binding site" evidence="1">
    <location>
        <position position="306"/>
    </location>
    <ligand>
        <name>Mn(2+)</name>
        <dbReference type="ChEBI" id="CHEBI:29035"/>
        <label>2</label>
    </ligand>
</feature>
<feature type="binding site" evidence="1">
    <location>
        <position position="311"/>
    </location>
    <ligand>
        <name>Mn(2+)</name>
        <dbReference type="ChEBI" id="CHEBI:29035"/>
        <label>2</label>
    </ligand>
</feature>
<feature type="binding site" evidence="1">
    <location>
        <position position="347"/>
    </location>
    <ligand>
        <name>Mn(2+)</name>
        <dbReference type="ChEBI" id="CHEBI:29035"/>
        <label>1</label>
    </ligand>
</feature>
<feature type="binding site" evidence="1">
    <location>
        <position position="348"/>
    </location>
    <ligand>
        <name>Mn(2+)</name>
        <dbReference type="ChEBI" id="CHEBI:29035"/>
        <label>1</label>
    </ligand>
</feature>
<feature type="binding site" evidence="1">
    <location>
        <position position="359"/>
    </location>
    <ligand>
        <name>Mn(2+)</name>
        <dbReference type="ChEBI" id="CHEBI:29035"/>
        <label>2</label>
    </ligand>
</feature>
<proteinExistence type="inferred from homology"/>
<keyword id="KW-0963">Cytoplasm</keyword>
<keyword id="KW-0413">Isomerase</keyword>
<keyword id="KW-0464">Manganese</keyword>
<keyword id="KW-0479">Metal-binding</keyword>
<gene>
    <name evidence="1" type="primary">deoB</name>
    <name type="ordered locus">ECUMN_5007</name>
</gene>
<name>DEOB_ECOLU</name>
<accession>B7NH51</accession>
<evidence type="ECO:0000255" key="1">
    <source>
        <dbReference type="HAMAP-Rule" id="MF_00740"/>
    </source>
</evidence>